<evidence type="ECO:0000255" key="1">
    <source>
        <dbReference type="HAMAP-Rule" id="MF_00572"/>
    </source>
</evidence>
<comment type="function">
    <text evidence="1">Catalyzes the condensation of the acetyl group of acetyl-CoA with 3-methyl-2-oxobutanoate (2-ketoisovalerate) to form 3-carboxy-3-hydroxy-4-methylpentanoate (2-isopropylmalate).</text>
</comment>
<comment type="catalytic activity">
    <reaction evidence="1">
        <text>3-methyl-2-oxobutanoate + acetyl-CoA + H2O = (2S)-2-isopropylmalate + CoA + H(+)</text>
        <dbReference type="Rhea" id="RHEA:21524"/>
        <dbReference type="ChEBI" id="CHEBI:1178"/>
        <dbReference type="ChEBI" id="CHEBI:11851"/>
        <dbReference type="ChEBI" id="CHEBI:15377"/>
        <dbReference type="ChEBI" id="CHEBI:15378"/>
        <dbReference type="ChEBI" id="CHEBI:57287"/>
        <dbReference type="ChEBI" id="CHEBI:57288"/>
        <dbReference type="EC" id="2.3.3.13"/>
    </reaction>
</comment>
<comment type="cofactor">
    <cofactor evidence="1">
        <name>Mg(2+)</name>
        <dbReference type="ChEBI" id="CHEBI:18420"/>
    </cofactor>
</comment>
<comment type="pathway">
    <text evidence="1">Amino-acid biosynthesis; L-leucine biosynthesis; L-leucine from 3-methyl-2-oxobutanoate: step 1/4.</text>
</comment>
<comment type="subunit">
    <text evidence="1">Homodimer.</text>
</comment>
<comment type="subcellular location">
    <subcellularLocation>
        <location evidence="1">Cytoplasm</location>
    </subcellularLocation>
</comment>
<comment type="similarity">
    <text evidence="1">Belongs to the alpha-IPM synthase/homocitrate synthase family. LeuA type 2 subfamily.</text>
</comment>
<keyword id="KW-0028">Amino-acid biosynthesis</keyword>
<keyword id="KW-0100">Branched-chain amino acid biosynthesis</keyword>
<keyword id="KW-0963">Cytoplasm</keyword>
<keyword id="KW-0432">Leucine biosynthesis</keyword>
<keyword id="KW-0460">Magnesium</keyword>
<keyword id="KW-0479">Metal-binding</keyword>
<keyword id="KW-1185">Reference proteome</keyword>
<keyword id="KW-0808">Transferase</keyword>
<sequence length="572" mass="62629">MLKNPHTKYRPANPFAGVVPGGRGLSDRTWPDNTITRPPVWMSTDLRDGNQALFEPMNSERKMRMFKMLVEIGLKEIEVAFPAASQTDFDFVRELIEGGHIPDDVTIEVLTQARPHLIERTFESVRGAKRAIVHVYNAVAPNFRRIVFDTDRAGVKQIAVDSARYFVEMAARQPGTDFTFQYSPEVFSGTELDFAVEVANAVIEVWQPTPQQKCIINLPATVEMSTPNVYADQIEWMHRHLARRDSVLLSVHPHNDRGTAVAAAELAVMAGADRVEGCLFGNGERTGNVDLVTLALNLYSQGVHPGLDFSRINEVARTVEHCTQLPIHPRHPYVGDLVFTAFSGSHQDAIKKGFAVQQPDAVWEVPYLPVDPADLGRSYESIIRVNSQSGKGGIAYLLEAEYGLVMPRRLQVEFSAAIQRITDERGTELSAGDIWRAFEEEYLAVAAPYAYVEHHLAEHGGQQGISLTVEEAGVRRVLRGVGNGPIDAALHALDAGAVLLGYEERAIGQGGDARAVAYIELADGEGGGSTFGVGIHANIVTASVLAIVSALDRLAQRRERADGVGRQVAATR</sequence>
<accession>A1KBD3</accession>
<proteinExistence type="inferred from homology"/>
<name>LEU1_AZOSB</name>
<dbReference type="EC" id="2.3.3.13" evidence="1"/>
<dbReference type="EMBL" id="AM406670">
    <property type="protein sequence ID" value="CAL96139.1"/>
    <property type="molecule type" value="Genomic_DNA"/>
</dbReference>
<dbReference type="RefSeq" id="WP_011767245.1">
    <property type="nucleotide sequence ID" value="NC_008702.1"/>
</dbReference>
<dbReference type="SMR" id="A1KBD3"/>
<dbReference type="STRING" id="62928.azo3523"/>
<dbReference type="KEGG" id="azo:azo3523"/>
<dbReference type="eggNOG" id="COG0119">
    <property type="taxonomic scope" value="Bacteria"/>
</dbReference>
<dbReference type="HOGENOM" id="CLU_004588_3_0_4"/>
<dbReference type="UniPathway" id="UPA00048">
    <property type="reaction ID" value="UER00070"/>
</dbReference>
<dbReference type="Proteomes" id="UP000002588">
    <property type="component" value="Chromosome"/>
</dbReference>
<dbReference type="GO" id="GO:0005737">
    <property type="term" value="C:cytoplasm"/>
    <property type="evidence" value="ECO:0007669"/>
    <property type="project" value="UniProtKB-SubCell"/>
</dbReference>
<dbReference type="GO" id="GO:0003852">
    <property type="term" value="F:2-isopropylmalate synthase activity"/>
    <property type="evidence" value="ECO:0007669"/>
    <property type="project" value="UniProtKB-UniRule"/>
</dbReference>
<dbReference type="GO" id="GO:0003985">
    <property type="term" value="F:acetyl-CoA C-acetyltransferase activity"/>
    <property type="evidence" value="ECO:0007669"/>
    <property type="project" value="UniProtKB-UniRule"/>
</dbReference>
<dbReference type="GO" id="GO:0000287">
    <property type="term" value="F:magnesium ion binding"/>
    <property type="evidence" value="ECO:0007669"/>
    <property type="project" value="UniProtKB-UniRule"/>
</dbReference>
<dbReference type="GO" id="GO:0009098">
    <property type="term" value="P:L-leucine biosynthetic process"/>
    <property type="evidence" value="ECO:0007669"/>
    <property type="project" value="UniProtKB-UniRule"/>
</dbReference>
<dbReference type="CDD" id="cd07942">
    <property type="entry name" value="DRE_TIM_LeuA"/>
    <property type="match status" value="1"/>
</dbReference>
<dbReference type="Gene3D" id="3.30.160.270">
    <property type="match status" value="1"/>
</dbReference>
<dbReference type="Gene3D" id="3.20.20.70">
    <property type="entry name" value="Aldolase class I"/>
    <property type="match status" value="1"/>
</dbReference>
<dbReference type="HAMAP" id="MF_00572">
    <property type="entry name" value="LeuA_type2"/>
    <property type="match status" value="1"/>
</dbReference>
<dbReference type="InterPro" id="IPR013709">
    <property type="entry name" value="2-isopropylmalate_synth_dimer"/>
</dbReference>
<dbReference type="InterPro" id="IPR002034">
    <property type="entry name" value="AIPM/Hcit_synth_CS"/>
</dbReference>
<dbReference type="InterPro" id="IPR013785">
    <property type="entry name" value="Aldolase_TIM"/>
</dbReference>
<dbReference type="InterPro" id="IPR005668">
    <property type="entry name" value="IPM_Synthase"/>
</dbReference>
<dbReference type="InterPro" id="IPR054692">
    <property type="entry name" value="LeuA-like_post-cat"/>
</dbReference>
<dbReference type="InterPro" id="IPR036230">
    <property type="entry name" value="LeuA_allosteric_dom_sf"/>
</dbReference>
<dbReference type="InterPro" id="IPR039371">
    <property type="entry name" value="LeuA_N_DRE-TIM"/>
</dbReference>
<dbReference type="InterPro" id="IPR000891">
    <property type="entry name" value="PYR_CT"/>
</dbReference>
<dbReference type="NCBIfam" id="TIGR00970">
    <property type="entry name" value="leuA_yeast"/>
    <property type="match status" value="1"/>
</dbReference>
<dbReference type="NCBIfam" id="NF002991">
    <property type="entry name" value="PRK03739.1"/>
    <property type="match status" value="1"/>
</dbReference>
<dbReference type="PANTHER" id="PTHR46911">
    <property type="match status" value="1"/>
</dbReference>
<dbReference type="PANTHER" id="PTHR46911:SF1">
    <property type="entry name" value="2-ISOPROPYLMALATE SYNTHASE"/>
    <property type="match status" value="1"/>
</dbReference>
<dbReference type="Pfam" id="PF00682">
    <property type="entry name" value="HMGL-like"/>
    <property type="match status" value="1"/>
</dbReference>
<dbReference type="Pfam" id="PF22615">
    <property type="entry name" value="IPMS_D2"/>
    <property type="match status" value="1"/>
</dbReference>
<dbReference type="Pfam" id="PF08502">
    <property type="entry name" value="LeuA_dimer"/>
    <property type="match status" value="1"/>
</dbReference>
<dbReference type="SMART" id="SM00917">
    <property type="entry name" value="LeuA_dimer"/>
    <property type="match status" value="1"/>
</dbReference>
<dbReference type="SUPFAM" id="SSF110921">
    <property type="entry name" value="2-isopropylmalate synthase LeuA, allosteric (dimerisation) domain"/>
    <property type="match status" value="1"/>
</dbReference>
<dbReference type="SUPFAM" id="SSF51569">
    <property type="entry name" value="Aldolase"/>
    <property type="match status" value="1"/>
</dbReference>
<dbReference type="SUPFAM" id="SSF89000">
    <property type="entry name" value="post-HMGL domain-like"/>
    <property type="match status" value="1"/>
</dbReference>
<dbReference type="PROSITE" id="PS00815">
    <property type="entry name" value="AIPM_HOMOCIT_SYNTH_1"/>
    <property type="match status" value="1"/>
</dbReference>
<dbReference type="PROSITE" id="PS00816">
    <property type="entry name" value="AIPM_HOMOCIT_SYNTH_2"/>
    <property type="match status" value="1"/>
</dbReference>
<dbReference type="PROSITE" id="PS50991">
    <property type="entry name" value="PYR_CT"/>
    <property type="match status" value="1"/>
</dbReference>
<organism>
    <name type="scientific">Azoarcus sp. (strain BH72)</name>
    <dbReference type="NCBI Taxonomy" id="418699"/>
    <lineage>
        <taxon>Bacteria</taxon>
        <taxon>Pseudomonadati</taxon>
        <taxon>Pseudomonadota</taxon>
        <taxon>Betaproteobacteria</taxon>
        <taxon>Rhodocyclales</taxon>
        <taxon>Zoogloeaceae</taxon>
        <taxon>Azoarcus</taxon>
    </lineage>
</organism>
<gene>
    <name evidence="1" type="primary">leuA</name>
    <name type="ordered locus">azo3523</name>
</gene>
<protein>
    <recommendedName>
        <fullName evidence="1">2-isopropylmalate synthase</fullName>
        <ecNumber evidence="1">2.3.3.13</ecNumber>
    </recommendedName>
    <alternativeName>
        <fullName evidence="1">Alpha-IPM synthase</fullName>
    </alternativeName>
    <alternativeName>
        <fullName evidence="1">Alpha-isopropylmalate synthase</fullName>
    </alternativeName>
</protein>
<feature type="chain" id="PRO_1000129498" description="2-isopropylmalate synthase">
    <location>
        <begin position="1"/>
        <end position="572"/>
    </location>
</feature>
<feature type="domain" description="Pyruvate carboxyltransferase" evidence="1">
    <location>
        <begin position="39"/>
        <end position="313"/>
    </location>
</feature>
<feature type="region of interest" description="Regulatory domain" evidence="1">
    <location>
        <begin position="445"/>
        <end position="572"/>
    </location>
</feature>
<feature type="binding site" evidence="1">
    <location>
        <position position="48"/>
    </location>
    <ligand>
        <name>Mg(2+)</name>
        <dbReference type="ChEBI" id="CHEBI:18420"/>
    </ligand>
</feature>
<feature type="binding site" evidence="1">
    <location>
        <position position="252"/>
    </location>
    <ligand>
        <name>Mg(2+)</name>
        <dbReference type="ChEBI" id="CHEBI:18420"/>
    </ligand>
</feature>
<feature type="binding site" evidence="1">
    <location>
        <position position="254"/>
    </location>
    <ligand>
        <name>Mg(2+)</name>
        <dbReference type="ChEBI" id="CHEBI:18420"/>
    </ligand>
</feature>
<feature type="binding site" evidence="1">
    <location>
        <position position="288"/>
    </location>
    <ligand>
        <name>Mg(2+)</name>
        <dbReference type="ChEBI" id="CHEBI:18420"/>
    </ligand>
</feature>
<reference key="1">
    <citation type="journal article" date="2006" name="Nat. Biotechnol.">
        <title>Complete genome of the mutualistic, N2-fixing grass endophyte Azoarcus sp. strain BH72.</title>
        <authorList>
            <person name="Krause A."/>
            <person name="Ramakumar A."/>
            <person name="Bartels D."/>
            <person name="Battistoni F."/>
            <person name="Bekel T."/>
            <person name="Boch J."/>
            <person name="Boehm M."/>
            <person name="Friedrich F."/>
            <person name="Hurek T."/>
            <person name="Krause L."/>
            <person name="Linke B."/>
            <person name="McHardy A.C."/>
            <person name="Sarkar A."/>
            <person name="Schneiker S."/>
            <person name="Syed A.A."/>
            <person name="Thauer R."/>
            <person name="Vorhoelter F.-J."/>
            <person name="Weidner S."/>
            <person name="Puehler A."/>
            <person name="Reinhold-Hurek B."/>
            <person name="Kaiser O."/>
            <person name="Goesmann A."/>
        </authorList>
    </citation>
    <scope>NUCLEOTIDE SEQUENCE [LARGE SCALE GENOMIC DNA]</scope>
    <source>
        <strain>BH72</strain>
    </source>
</reference>